<name>ABDH_ECO45</name>
<reference key="1">
    <citation type="journal article" date="2009" name="PLoS Genet.">
        <title>Organised genome dynamics in the Escherichia coli species results in highly diverse adaptive paths.</title>
        <authorList>
            <person name="Touchon M."/>
            <person name="Hoede C."/>
            <person name="Tenaillon O."/>
            <person name="Barbe V."/>
            <person name="Baeriswyl S."/>
            <person name="Bidet P."/>
            <person name="Bingen E."/>
            <person name="Bonacorsi S."/>
            <person name="Bouchier C."/>
            <person name="Bouvet O."/>
            <person name="Calteau A."/>
            <person name="Chiapello H."/>
            <person name="Clermont O."/>
            <person name="Cruveiller S."/>
            <person name="Danchin A."/>
            <person name="Diard M."/>
            <person name="Dossat C."/>
            <person name="Karoui M.E."/>
            <person name="Frapy E."/>
            <person name="Garry L."/>
            <person name="Ghigo J.M."/>
            <person name="Gilles A.M."/>
            <person name="Johnson J."/>
            <person name="Le Bouguenec C."/>
            <person name="Lescat M."/>
            <person name="Mangenot S."/>
            <person name="Martinez-Jehanne V."/>
            <person name="Matic I."/>
            <person name="Nassif X."/>
            <person name="Oztas S."/>
            <person name="Petit M.A."/>
            <person name="Pichon C."/>
            <person name="Rouy Z."/>
            <person name="Ruf C.S."/>
            <person name="Schneider D."/>
            <person name="Tourret J."/>
            <person name="Vacherie B."/>
            <person name="Vallenet D."/>
            <person name="Medigue C."/>
            <person name="Rocha E.P.C."/>
            <person name="Denamur E."/>
        </authorList>
    </citation>
    <scope>NUCLEOTIDE SEQUENCE [LARGE SCALE GENOMIC DNA]</scope>
    <source>
        <strain>S88 / ExPEC</strain>
    </source>
</reference>
<sequence length="474" mass="50859">MQHKLLINGELVSGEGEKQPVYNPATGDVLLEIAEASAEQVNAAVRAADAAFAEWGQTTPKARAECLLKLADVIEENGQVFAELESRNCGKPLHSAFNDEIPAIVDVFRFFAGAARCLNGLAAGEYLEGHTSMIRRDPLGVVASIAPWNYPLMMAAWKLAPALAAGNCVVLKPSEITPLTALKLAELAKDIFPAGVINVLFGRGKTVGDPLTGHPKVRMVSLTGSIATGEHIISHTAPSIKRTHMELGGKAPVIVFDDADIEAVVEGVRTFGYYNAGQDCTAACRIYAQKGIYDTLVEKLGAAVATLKSGSPDDESTELGPLSSLAHLERVSKAVEEAKATGHIKVITGGEKRKGNGYYYAPTLLAGALQDDAIVQKEVFGPVVSVTLFDNEEQVVNWANDSQYGLASSVWTKDVGRAHRVSARLQYGCTWVNTHFMLVSEMPHGGQKLSGYGKDMSLYGLEDYTVVRHVMVKH</sequence>
<gene>
    <name evidence="1" type="primary">patD</name>
    <name type="ordered locus">ECS88_1538</name>
</gene>
<accession>B7MMS8</accession>
<proteinExistence type="inferred from homology"/>
<dbReference type="EC" id="1.2.1.19" evidence="1"/>
<dbReference type="EC" id="1.2.1.-" evidence="1"/>
<dbReference type="EMBL" id="CU928161">
    <property type="protein sequence ID" value="CAR02855.1"/>
    <property type="molecule type" value="Genomic_DNA"/>
</dbReference>
<dbReference type="RefSeq" id="WP_001163909.1">
    <property type="nucleotide sequence ID" value="NC_011742.1"/>
</dbReference>
<dbReference type="SMR" id="B7MMS8"/>
<dbReference type="KEGG" id="ecz:ECS88_1538"/>
<dbReference type="HOGENOM" id="CLU_005391_1_0_6"/>
<dbReference type="UniPathway" id="UPA00188">
    <property type="reaction ID" value="UER00292"/>
</dbReference>
<dbReference type="Proteomes" id="UP000000747">
    <property type="component" value="Chromosome"/>
</dbReference>
<dbReference type="GO" id="GO:0019145">
    <property type="term" value="F:aminobutyraldehyde dehydrogenase (NAD+) activity"/>
    <property type="evidence" value="ECO:0007669"/>
    <property type="project" value="UniProtKB-UniRule"/>
</dbReference>
<dbReference type="GO" id="GO:0051287">
    <property type="term" value="F:NAD binding"/>
    <property type="evidence" value="ECO:0007669"/>
    <property type="project" value="UniProtKB-UniRule"/>
</dbReference>
<dbReference type="GO" id="GO:0019477">
    <property type="term" value="P:L-lysine catabolic process"/>
    <property type="evidence" value="ECO:0007669"/>
    <property type="project" value="UniProtKB-UniRule"/>
</dbReference>
<dbReference type="GO" id="GO:0009447">
    <property type="term" value="P:putrescine catabolic process"/>
    <property type="evidence" value="ECO:0007669"/>
    <property type="project" value="UniProtKB-UniRule"/>
</dbReference>
<dbReference type="CDD" id="cd07092">
    <property type="entry name" value="ALDH_ABALDH-YdcW"/>
    <property type="match status" value="1"/>
</dbReference>
<dbReference type="FunFam" id="3.40.605.10:FF:000001">
    <property type="entry name" value="Aldehyde dehydrogenase 1"/>
    <property type="match status" value="1"/>
</dbReference>
<dbReference type="FunFam" id="3.40.309.10:FF:000010">
    <property type="entry name" value="Gamma-aminobutyraldehyde dehydrogenase"/>
    <property type="match status" value="1"/>
</dbReference>
<dbReference type="Gene3D" id="3.40.605.10">
    <property type="entry name" value="Aldehyde Dehydrogenase, Chain A, domain 1"/>
    <property type="match status" value="1"/>
</dbReference>
<dbReference type="Gene3D" id="3.40.309.10">
    <property type="entry name" value="Aldehyde Dehydrogenase, Chain A, domain 2"/>
    <property type="match status" value="1"/>
</dbReference>
<dbReference type="HAMAP" id="MF_01275">
    <property type="entry name" value="Aldedh_Prr"/>
    <property type="match status" value="1"/>
</dbReference>
<dbReference type="InterPro" id="IPR016161">
    <property type="entry name" value="Ald_DH/histidinol_DH"/>
</dbReference>
<dbReference type="InterPro" id="IPR016163">
    <property type="entry name" value="Ald_DH_C"/>
</dbReference>
<dbReference type="InterPro" id="IPR029510">
    <property type="entry name" value="Ald_DH_CS_GLU"/>
</dbReference>
<dbReference type="InterPro" id="IPR016162">
    <property type="entry name" value="Ald_DH_N"/>
</dbReference>
<dbReference type="InterPro" id="IPR015590">
    <property type="entry name" value="Aldehyde_DH_dom"/>
</dbReference>
<dbReference type="InterPro" id="IPR015657">
    <property type="entry name" value="Aminobutyraldehyde_DH"/>
</dbReference>
<dbReference type="InterPro" id="IPR017749">
    <property type="entry name" value="PatD"/>
</dbReference>
<dbReference type="NCBIfam" id="TIGR03374">
    <property type="entry name" value="ABALDH"/>
    <property type="match status" value="1"/>
</dbReference>
<dbReference type="NCBIfam" id="NF010000">
    <property type="entry name" value="PRK13473.1"/>
    <property type="match status" value="1"/>
</dbReference>
<dbReference type="PANTHER" id="PTHR11699">
    <property type="entry name" value="ALDEHYDE DEHYDROGENASE-RELATED"/>
    <property type="match status" value="1"/>
</dbReference>
<dbReference type="Pfam" id="PF00171">
    <property type="entry name" value="Aldedh"/>
    <property type="match status" value="1"/>
</dbReference>
<dbReference type="SUPFAM" id="SSF53720">
    <property type="entry name" value="ALDH-like"/>
    <property type="match status" value="1"/>
</dbReference>
<dbReference type="PROSITE" id="PS00687">
    <property type="entry name" value="ALDEHYDE_DEHYDR_GLU"/>
    <property type="match status" value="1"/>
</dbReference>
<feature type="chain" id="PRO_1000140268" description="Gamma-aminobutyraldehyde dehydrogenase">
    <location>
        <begin position="1"/>
        <end position="474"/>
    </location>
</feature>
<feature type="active site" evidence="1">
    <location>
        <position position="246"/>
    </location>
</feature>
<feature type="active site" description="Nucleophile" evidence="1">
    <location>
        <position position="280"/>
    </location>
</feature>
<feature type="binding site" evidence="1">
    <location>
        <begin position="146"/>
        <end position="148"/>
    </location>
    <ligand>
        <name>NAD(+)</name>
        <dbReference type="ChEBI" id="CHEBI:57540"/>
    </ligand>
</feature>
<feature type="binding site" evidence="1">
    <location>
        <begin position="172"/>
        <end position="175"/>
    </location>
    <ligand>
        <name>NAD(+)</name>
        <dbReference type="ChEBI" id="CHEBI:57540"/>
    </ligand>
</feature>
<feature type="binding site" evidence="1">
    <location>
        <position position="209"/>
    </location>
    <ligand>
        <name>NAD(+)</name>
        <dbReference type="ChEBI" id="CHEBI:57540"/>
    </ligand>
</feature>
<feature type="binding site" evidence="1">
    <location>
        <begin position="225"/>
        <end position="228"/>
    </location>
    <ligand>
        <name>NAD(+)</name>
        <dbReference type="ChEBI" id="CHEBI:57540"/>
    </ligand>
</feature>
<feature type="binding site" evidence="1">
    <location>
        <position position="280"/>
    </location>
    <ligand>
        <name>NAD(+)</name>
        <dbReference type="ChEBI" id="CHEBI:57540"/>
    </ligand>
</feature>
<organism>
    <name type="scientific">Escherichia coli O45:K1 (strain S88 / ExPEC)</name>
    <dbReference type="NCBI Taxonomy" id="585035"/>
    <lineage>
        <taxon>Bacteria</taxon>
        <taxon>Pseudomonadati</taxon>
        <taxon>Pseudomonadota</taxon>
        <taxon>Gammaproteobacteria</taxon>
        <taxon>Enterobacterales</taxon>
        <taxon>Enterobacteriaceae</taxon>
        <taxon>Escherichia</taxon>
    </lineage>
</organism>
<evidence type="ECO:0000255" key="1">
    <source>
        <dbReference type="HAMAP-Rule" id="MF_01275"/>
    </source>
</evidence>
<keyword id="KW-0520">NAD</keyword>
<keyword id="KW-0560">Oxidoreductase</keyword>
<keyword id="KW-1185">Reference proteome</keyword>
<protein>
    <recommendedName>
        <fullName evidence="1">Gamma-aminobutyraldehyde dehydrogenase</fullName>
        <shortName evidence="1">ABALDH</shortName>
        <ecNumber evidence="1">1.2.1.19</ecNumber>
    </recommendedName>
    <alternativeName>
        <fullName evidence="1">1-pyrroline dehydrogenase</fullName>
    </alternativeName>
    <alternativeName>
        <fullName evidence="1">4-aminobutanal dehydrogenase</fullName>
    </alternativeName>
    <alternativeName>
        <fullName evidence="1">5-aminopentanal dehydrogenase</fullName>
        <ecNumber evidence="1">1.2.1.-</ecNumber>
    </alternativeName>
</protein>
<comment type="function">
    <text evidence="1">Catalyzes the oxidation 4-aminobutanal (gamma-aminobutyraldehyde) to 4-aminobutanoate (gamma-aminobutyrate or GABA). This is the second step in one of two pathways for putrescine degradation, where putrescine is converted into 4-aminobutanoate via 4-aminobutanal. Also functions as a 5-aminopentanal dehydrogenase in a a L-lysine degradation pathway to succinate that proceeds via cadaverine, glutarate and L-2-hydroxyglutarate.</text>
</comment>
<comment type="catalytic activity">
    <reaction evidence="1">
        <text>4-aminobutanal + NAD(+) + H2O = 4-aminobutanoate + NADH + 2 H(+)</text>
        <dbReference type="Rhea" id="RHEA:19105"/>
        <dbReference type="ChEBI" id="CHEBI:15377"/>
        <dbReference type="ChEBI" id="CHEBI:15378"/>
        <dbReference type="ChEBI" id="CHEBI:57540"/>
        <dbReference type="ChEBI" id="CHEBI:57945"/>
        <dbReference type="ChEBI" id="CHEBI:58264"/>
        <dbReference type="ChEBI" id="CHEBI:59888"/>
        <dbReference type="EC" id="1.2.1.19"/>
    </reaction>
    <physiologicalReaction direction="left-to-right" evidence="1">
        <dbReference type="Rhea" id="RHEA:19106"/>
    </physiologicalReaction>
</comment>
<comment type="catalytic activity">
    <reaction evidence="1">
        <text>5-aminopentanal + NAD(+) + H2O = 5-aminopentanoate + NADH + 2 H(+)</text>
        <dbReference type="Rhea" id="RHEA:61632"/>
        <dbReference type="ChEBI" id="CHEBI:15377"/>
        <dbReference type="ChEBI" id="CHEBI:15378"/>
        <dbReference type="ChEBI" id="CHEBI:57540"/>
        <dbReference type="ChEBI" id="CHEBI:57945"/>
        <dbReference type="ChEBI" id="CHEBI:144896"/>
        <dbReference type="ChEBI" id="CHEBI:356010"/>
    </reaction>
    <physiologicalReaction direction="left-to-right" evidence="1">
        <dbReference type="Rhea" id="RHEA:61633"/>
    </physiologicalReaction>
</comment>
<comment type="pathway">
    <text evidence="1">Amine and polyamine degradation; putrescine degradation; 4-aminobutanoate from 4-aminobutanal: step 1/1.</text>
</comment>
<comment type="pathway">
    <text evidence="1">Amino-acid degradation.</text>
</comment>
<comment type="subunit">
    <text evidence="1">Homotetramer.</text>
</comment>
<comment type="miscellaneous">
    <text evidence="1">4-aminobutanal can spontaneously cyclize to 1-pyrroline, and 5-aminopentanal to 1-piperideine.</text>
</comment>
<comment type="similarity">
    <text evidence="1">Belongs to the aldehyde dehydrogenase family. Gamma-aminobutyraldehyde dehydrogenase subfamily.</text>
</comment>